<reference key="1">
    <citation type="journal article" date="2007" name="J. Bacteriol.">
        <title>The complete genome sequence of Roseobacter denitrificans reveals a mixotrophic rather than photosynthetic metabolism.</title>
        <authorList>
            <person name="Swingley W.D."/>
            <person name="Sadekar S."/>
            <person name="Mastrian S.D."/>
            <person name="Matthies H.J."/>
            <person name="Hao J."/>
            <person name="Ramos H."/>
            <person name="Acharya C.R."/>
            <person name="Conrad A.L."/>
            <person name="Taylor H.L."/>
            <person name="Dejesa L.C."/>
            <person name="Shah M.K."/>
            <person name="O'Huallachain M.E."/>
            <person name="Lince M.T."/>
            <person name="Blankenship R.E."/>
            <person name="Beatty J.T."/>
            <person name="Touchman J.W."/>
        </authorList>
    </citation>
    <scope>NUCLEOTIDE SEQUENCE [LARGE SCALE GENOMIC DNA]</scope>
    <source>
        <strain>ATCC 33942 / OCh 114</strain>
    </source>
</reference>
<keyword id="KW-0414">Isoprene biosynthesis</keyword>
<keyword id="KW-0460">Magnesium</keyword>
<keyword id="KW-0479">Metal-binding</keyword>
<keyword id="KW-1185">Reference proteome</keyword>
<keyword id="KW-0784">Thiamine biosynthesis</keyword>
<keyword id="KW-0786">Thiamine pyrophosphate</keyword>
<keyword id="KW-0808">Transferase</keyword>
<protein>
    <recommendedName>
        <fullName evidence="1">1-deoxy-D-xylulose-5-phosphate synthase 1</fullName>
        <ecNumber evidence="1">2.2.1.7</ecNumber>
    </recommendedName>
    <alternativeName>
        <fullName evidence="1">1-deoxyxylulose-5-phosphate synthase 1</fullName>
        <shortName evidence="1">DXP synthase 1</shortName>
        <shortName evidence="1">DXPS 1</shortName>
    </alternativeName>
</protein>
<gene>
    <name evidence="1" type="primary">dxs1</name>
    <name type="ordered locus">RD1_0101</name>
</gene>
<sequence>MTDTKTPTLDRVAGPADLRSMSDTELRNVADELRAEVVEAVSQTGGHLGSSLGVVELSVAIHAVFDTPRDKLVWDVGHQCYPHKILTGRRKQMPTLRQGGGISGFTKRSESEYDPFGAAHSSTSISAALGFTISRDMGQPTGDAVAVIGDGSISAGMAYEAMNNAGHEGRRMFVILNDNEMSIAPPVGAMSSYLSSLSELSRAGPFGGLVAIAEGMEQLAPKPVRDGARRARELVTGLENRGTFFEELGFDYIGPIDGHDMAQLLSVLRGAKARATGPVLIHCCTVKGKGYAPAEGSADKYHGVSKFDVGTGVQAKAKANAPSYTAVFGDALTTLAEEDPSVVAVTAAMPSGTGVDRMAKRFPNRVFDVGIAEQHGVTFAAAMAATGLKPFCAIYSTFLQRGYDQIVHDVALQGLPVRFAIDRAGLVGADGATHAGSFDIGYLGALPGMVVMAAADEAELVHMVATAGAHNDGPIAFRYPRGNGTGVPLPETGRVLEIGKGRMIREGDGEVAILSLGTLLSDCEAAARILEAEGINATIADARFAKPLDMALIANLVQTHKALITVEQGAMAGFGAMVLQSMAAEGLLDLGCKVRTMCLPDRFIDQAAPAEMYRDAGLDTMGIVEQVTRVLGRDLKVVTLNAKRR</sequence>
<accession>Q16DV7</accession>
<name>DXS1_ROSDO</name>
<feature type="chain" id="PRO_0000256478" description="1-deoxy-D-xylulose-5-phosphate synthase 1">
    <location>
        <begin position="1"/>
        <end position="645"/>
    </location>
</feature>
<feature type="region of interest" description="Disordered" evidence="2">
    <location>
        <begin position="1"/>
        <end position="20"/>
    </location>
</feature>
<feature type="binding site" evidence="1">
    <location>
        <position position="78"/>
    </location>
    <ligand>
        <name>thiamine diphosphate</name>
        <dbReference type="ChEBI" id="CHEBI:58937"/>
    </ligand>
</feature>
<feature type="binding site" evidence="1">
    <location>
        <begin position="119"/>
        <end position="121"/>
    </location>
    <ligand>
        <name>thiamine diphosphate</name>
        <dbReference type="ChEBI" id="CHEBI:58937"/>
    </ligand>
</feature>
<feature type="binding site" evidence="1">
    <location>
        <position position="150"/>
    </location>
    <ligand>
        <name>Mg(2+)</name>
        <dbReference type="ChEBI" id="CHEBI:18420"/>
    </ligand>
</feature>
<feature type="binding site" evidence="1">
    <location>
        <begin position="151"/>
        <end position="152"/>
    </location>
    <ligand>
        <name>thiamine diphosphate</name>
        <dbReference type="ChEBI" id="CHEBI:58937"/>
    </ligand>
</feature>
<feature type="binding site" evidence="1">
    <location>
        <position position="179"/>
    </location>
    <ligand>
        <name>Mg(2+)</name>
        <dbReference type="ChEBI" id="CHEBI:18420"/>
    </ligand>
</feature>
<feature type="binding site" evidence="1">
    <location>
        <position position="179"/>
    </location>
    <ligand>
        <name>thiamine diphosphate</name>
        <dbReference type="ChEBI" id="CHEBI:58937"/>
    </ligand>
</feature>
<feature type="binding site" evidence="1">
    <location>
        <position position="291"/>
    </location>
    <ligand>
        <name>thiamine diphosphate</name>
        <dbReference type="ChEBI" id="CHEBI:58937"/>
    </ligand>
</feature>
<feature type="binding site" evidence="1">
    <location>
        <position position="373"/>
    </location>
    <ligand>
        <name>thiamine diphosphate</name>
        <dbReference type="ChEBI" id="CHEBI:58937"/>
    </ligand>
</feature>
<proteinExistence type="inferred from homology"/>
<evidence type="ECO:0000255" key="1">
    <source>
        <dbReference type="HAMAP-Rule" id="MF_00315"/>
    </source>
</evidence>
<evidence type="ECO:0000256" key="2">
    <source>
        <dbReference type="SAM" id="MobiDB-lite"/>
    </source>
</evidence>
<organism>
    <name type="scientific">Roseobacter denitrificans (strain ATCC 33942 / OCh 114)</name>
    <name type="common">Erythrobacter sp. (strain OCh 114)</name>
    <name type="synonym">Roseobacter denitrificans</name>
    <dbReference type="NCBI Taxonomy" id="375451"/>
    <lineage>
        <taxon>Bacteria</taxon>
        <taxon>Pseudomonadati</taxon>
        <taxon>Pseudomonadota</taxon>
        <taxon>Alphaproteobacteria</taxon>
        <taxon>Rhodobacterales</taxon>
        <taxon>Roseobacteraceae</taxon>
        <taxon>Roseobacter</taxon>
    </lineage>
</organism>
<comment type="function">
    <text evidence="1">Catalyzes the acyloin condensation reaction between C atoms 2 and 3 of pyruvate and glyceraldehyde 3-phosphate to yield 1-deoxy-D-xylulose-5-phosphate (DXP).</text>
</comment>
<comment type="catalytic activity">
    <reaction evidence="1">
        <text>D-glyceraldehyde 3-phosphate + pyruvate + H(+) = 1-deoxy-D-xylulose 5-phosphate + CO2</text>
        <dbReference type="Rhea" id="RHEA:12605"/>
        <dbReference type="ChEBI" id="CHEBI:15361"/>
        <dbReference type="ChEBI" id="CHEBI:15378"/>
        <dbReference type="ChEBI" id="CHEBI:16526"/>
        <dbReference type="ChEBI" id="CHEBI:57792"/>
        <dbReference type="ChEBI" id="CHEBI:59776"/>
        <dbReference type="EC" id="2.2.1.7"/>
    </reaction>
</comment>
<comment type="cofactor">
    <cofactor evidence="1">
        <name>Mg(2+)</name>
        <dbReference type="ChEBI" id="CHEBI:18420"/>
    </cofactor>
    <text evidence="1">Binds 1 Mg(2+) ion per subunit.</text>
</comment>
<comment type="cofactor">
    <cofactor evidence="1">
        <name>thiamine diphosphate</name>
        <dbReference type="ChEBI" id="CHEBI:58937"/>
    </cofactor>
    <text evidence="1">Binds 1 thiamine pyrophosphate per subunit.</text>
</comment>
<comment type="pathway">
    <text evidence="1">Metabolic intermediate biosynthesis; 1-deoxy-D-xylulose 5-phosphate biosynthesis; 1-deoxy-D-xylulose 5-phosphate from D-glyceraldehyde 3-phosphate and pyruvate: step 1/1.</text>
</comment>
<comment type="subunit">
    <text evidence="1">Homodimer.</text>
</comment>
<comment type="similarity">
    <text evidence="1">Belongs to the transketolase family. DXPS subfamily.</text>
</comment>
<dbReference type="EC" id="2.2.1.7" evidence="1"/>
<dbReference type="EMBL" id="CP000362">
    <property type="protein sequence ID" value="ABG29836.1"/>
    <property type="molecule type" value="Genomic_DNA"/>
</dbReference>
<dbReference type="RefSeq" id="WP_011566458.1">
    <property type="nucleotide sequence ID" value="NC_008209.1"/>
</dbReference>
<dbReference type="SMR" id="Q16DV7"/>
<dbReference type="STRING" id="375451.RD1_0101"/>
<dbReference type="KEGG" id="rde:RD1_0101"/>
<dbReference type="eggNOG" id="COG1154">
    <property type="taxonomic scope" value="Bacteria"/>
</dbReference>
<dbReference type="HOGENOM" id="CLU_009227_1_4_5"/>
<dbReference type="OrthoDB" id="9803371at2"/>
<dbReference type="UniPathway" id="UPA00064">
    <property type="reaction ID" value="UER00091"/>
</dbReference>
<dbReference type="Proteomes" id="UP000007029">
    <property type="component" value="Chromosome"/>
</dbReference>
<dbReference type="GO" id="GO:0008661">
    <property type="term" value="F:1-deoxy-D-xylulose-5-phosphate synthase activity"/>
    <property type="evidence" value="ECO:0007669"/>
    <property type="project" value="UniProtKB-UniRule"/>
</dbReference>
<dbReference type="GO" id="GO:0000287">
    <property type="term" value="F:magnesium ion binding"/>
    <property type="evidence" value="ECO:0007669"/>
    <property type="project" value="UniProtKB-UniRule"/>
</dbReference>
<dbReference type="GO" id="GO:0030976">
    <property type="term" value="F:thiamine pyrophosphate binding"/>
    <property type="evidence" value="ECO:0007669"/>
    <property type="project" value="UniProtKB-UniRule"/>
</dbReference>
<dbReference type="GO" id="GO:0052865">
    <property type="term" value="P:1-deoxy-D-xylulose 5-phosphate biosynthetic process"/>
    <property type="evidence" value="ECO:0007669"/>
    <property type="project" value="UniProtKB-UniPathway"/>
</dbReference>
<dbReference type="GO" id="GO:0019682">
    <property type="term" value="P:glyceraldehyde-3-phosphate metabolic process"/>
    <property type="evidence" value="ECO:0007669"/>
    <property type="project" value="UniProtKB-ARBA"/>
</dbReference>
<dbReference type="GO" id="GO:0016114">
    <property type="term" value="P:terpenoid biosynthetic process"/>
    <property type="evidence" value="ECO:0007669"/>
    <property type="project" value="UniProtKB-UniRule"/>
</dbReference>
<dbReference type="GO" id="GO:0009228">
    <property type="term" value="P:thiamine biosynthetic process"/>
    <property type="evidence" value="ECO:0007669"/>
    <property type="project" value="UniProtKB-UniRule"/>
</dbReference>
<dbReference type="CDD" id="cd02007">
    <property type="entry name" value="TPP_DXS"/>
    <property type="match status" value="1"/>
</dbReference>
<dbReference type="CDD" id="cd07033">
    <property type="entry name" value="TPP_PYR_DXS_TK_like"/>
    <property type="match status" value="1"/>
</dbReference>
<dbReference type="FunFam" id="3.40.50.920:FF:000002">
    <property type="entry name" value="1-deoxy-D-xylulose-5-phosphate synthase"/>
    <property type="match status" value="1"/>
</dbReference>
<dbReference type="FunFam" id="3.40.50.970:FF:000005">
    <property type="entry name" value="1-deoxy-D-xylulose-5-phosphate synthase"/>
    <property type="match status" value="1"/>
</dbReference>
<dbReference type="Gene3D" id="3.40.50.920">
    <property type="match status" value="1"/>
</dbReference>
<dbReference type="Gene3D" id="3.40.50.970">
    <property type="match status" value="2"/>
</dbReference>
<dbReference type="HAMAP" id="MF_00315">
    <property type="entry name" value="DXP_synth"/>
    <property type="match status" value="1"/>
</dbReference>
<dbReference type="InterPro" id="IPR005477">
    <property type="entry name" value="Dxylulose-5-P_synthase"/>
</dbReference>
<dbReference type="InterPro" id="IPR029061">
    <property type="entry name" value="THDP-binding"/>
</dbReference>
<dbReference type="InterPro" id="IPR000399">
    <property type="entry name" value="TPP-bd_CS"/>
</dbReference>
<dbReference type="InterPro" id="IPR009014">
    <property type="entry name" value="Transketo_C/PFOR_II"/>
</dbReference>
<dbReference type="InterPro" id="IPR005475">
    <property type="entry name" value="Transketolase-like_Pyr-bd"/>
</dbReference>
<dbReference type="InterPro" id="IPR020826">
    <property type="entry name" value="Transketolase_BS"/>
</dbReference>
<dbReference type="InterPro" id="IPR033248">
    <property type="entry name" value="Transketolase_C"/>
</dbReference>
<dbReference type="InterPro" id="IPR049557">
    <property type="entry name" value="Transketolase_CS"/>
</dbReference>
<dbReference type="NCBIfam" id="TIGR00204">
    <property type="entry name" value="dxs"/>
    <property type="match status" value="1"/>
</dbReference>
<dbReference type="NCBIfam" id="NF003933">
    <property type="entry name" value="PRK05444.2-2"/>
    <property type="match status" value="1"/>
</dbReference>
<dbReference type="PANTHER" id="PTHR43322">
    <property type="entry name" value="1-D-DEOXYXYLULOSE 5-PHOSPHATE SYNTHASE-RELATED"/>
    <property type="match status" value="1"/>
</dbReference>
<dbReference type="PANTHER" id="PTHR43322:SF5">
    <property type="entry name" value="1-DEOXY-D-XYLULOSE-5-PHOSPHATE SYNTHASE, CHLOROPLASTIC"/>
    <property type="match status" value="1"/>
</dbReference>
<dbReference type="Pfam" id="PF13292">
    <property type="entry name" value="DXP_synthase_N"/>
    <property type="match status" value="1"/>
</dbReference>
<dbReference type="Pfam" id="PF02779">
    <property type="entry name" value="Transket_pyr"/>
    <property type="match status" value="1"/>
</dbReference>
<dbReference type="Pfam" id="PF02780">
    <property type="entry name" value="Transketolase_C"/>
    <property type="match status" value="1"/>
</dbReference>
<dbReference type="SMART" id="SM00861">
    <property type="entry name" value="Transket_pyr"/>
    <property type="match status" value="1"/>
</dbReference>
<dbReference type="SUPFAM" id="SSF52518">
    <property type="entry name" value="Thiamin diphosphate-binding fold (THDP-binding)"/>
    <property type="match status" value="2"/>
</dbReference>
<dbReference type="SUPFAM" id="SSF52922">
    <property type="entry name" value="TK C-terminal domain-like"/>
    <property type="match status" value="1"/>
</dbReference>
<dbReference type="PROSITE" id="PS00801">
    <property type="entry name" value="TRANSKETOLASE_1"/>
    <property type="match status" value="1"/>
</dbReference>
<dbReference type="PROSITE" id="PS00802">
    <property type="entry name" value="TRANSKETOLASE_2"/>
    <property type="match status" value="1"/>
</dbReference>